<protein>
    <recommendedName>
        <fullName evidence="1">Ribonuclease P protein component</fullName>
        <shortName evidence="1">RNase P protein</shortName>
        <shortName evidence="1">RNaseP protein</shortName>
        <ecNumber evidence="1">3.1.26.5</ecNumber>
    </recommendedName>
    <alternativeName>
        <fullName evidence="1">Protein C5</fullName>
    </alternativeName>
</protein>
<feature type="chain" id="PRO_0000198451" description="Ribonuclease P protein component">
    <location>
        <begin position="1"/>
        <end position="125"/>
    </location>
</feature>
<dbReference type="EC" id="3.1.26.5" evidence="1"/>
<dbReference type="EMBL" id="BA000016">
    <property type="protein sequence ID" value="BAB82365.1"/>
    <property type="molecule type" value="Genomic_DNA"/>
</dbReference>
<dbReference type="RefSeq" id="WP_003450986.1">
    <property type="nucleotide sequence ID" value="NC_003366.1"/>
</dbReference>
<dbReference type="SMR" id="Q8XH26"/>
<dbReference type="STRING" id="195102.gene:10492003"/>
<dbReference type="GeneID" id="93000726"/>
<dbReference type="KEGG" id="cpe:CPE2659"/>
<dbReference type="HOGENOM" id="CLU_117179_9_3_9"/>
<dbReference type="Proteomes" id="UP000000818">
    <property type="component" value="Chromosome"/>
</dbReference>
<dbReference type="GO" id="GO:0030677">
    <property type="term" value="C:ribonuclease P complex"/>
    <property type="evidence" value="ECO:0007669"/>
    <property type="project" value="TreeGrafter"/>
</dbReference>
<dbReference type="GO" id="GO:0042781">
    <property type="term" value="F:3'-tRNA processing endoribonuclease activity"/>
    <property type="evidence" value="ECO:0007669"/>
    <property type="project" value="TreeGrafter"/>
</dbReference>
<dbReference type="GO" id="GO:0004526">
    <property type="term" value="F:ribonuclease P activity"/>
    <property type="evidence" value="ECO:0007669"/>
    <property type="project" value="UniProtKB-UniRule"/>
</dbReference>
<dbReference type="GO" id="GO:0000049">
    <property type="term" value="F:tRNA binding"/>
    <property type="evidence" value="ECO:0007669"/>
    <property type="project" value="UniProtKB-UniRule"/>
</dbReference>
<dbReference type="GO" id="GO:0001682">
    <property type="term" value="P:tRNA 5'-leader removal"/>
    <property type="evidence" value="ECO:0007669"/>
    <property type="project" value="UniProtKB-UniRule"/>
</dbReference>
<dbReference type="Gene3D" id="3.30.230.10">
    <property type="match status" value="1"/>
</dbReference>
<dbReference type="HAMAP" id="MF_00227">
    <property type="entry name" value="RNase_P"/>
    <property type="match status" value="1"/>
</dbReference>
<dbReference type="InterPro" id="IPR020568">
    <property type="entry name" value="Ribosomal_Su5_D2-typ_SF"/>
</dbReference>
<dbReference type="InterPro" id="IPR014721">
    <property type="entry name" value="Ribsml_uS5_D2-typ_fold_subgr"/>
</dbReference>
<dbReference type="InterPro" id="IPR000100">
    <property type="entry name" value="RNase_P"/>
</dbReference>
<dbReference type="NCBIfam" id="TIGR00188">
    <property type="entry name" value="rnpA"/>
    <property type="match status" value="1"/>
</dbReference>
<dbReference type="PANTHER" id="PTHR33992">
    <property type="entry name" value="RIBONUCLEASE P PROTEIN COMPONENT"/>
    <property type="match status" value="1"/>
</dbReference>
<dbReference type="PANTHER" id="PTHR33992:SF1">
    <property type="entry name" value="RIBONUCLEASE P PROTEIN COMPONENT"/>
    <property type="match status" value="1"/>
</dbReference>
<dbReference type="Pfam" id="PF00825">
    <property type="entry name" value="Ribonuclease_P"/>
    <property type="match status" value="1"/>
</dbReference>
<dbReference type="SUPFAM" id="SSF54211">
    <property type="entry name" value="Ribosomal protein S5 domain 2-like"/>
    <property type="match status" value="1"/>
</dbReference>
<proteinExistence type="inferred from homology"/>
<comment type="function">
    <text evidence="1">RNaseP catalyzes the removal of the 5'-leader sequence from pre-tRNA to produce the mature 5'-terminus. It can also cleave other RNA substrates such as 4.5S RNA. The protein component plays an auxiliary but essential role in vivo by binding to the 5'-leader sequence and broadening the substrate specificity of the ribozyme.</text>
</comment>
<comment type="catalytic activity">
    <reaction evidence="1">
        <text>Endonucleolytic cleavage of RNA, removing 5'-extranucleotides from tRNA precursor.</text>
        <dbReference type="EC" id="3.1.26.5"/>
    </reaction>
</comment>
<comment type="subunit">
    <text evidence="1">Consists of a catalytic RNA component (M1 or rnpB) and a protein subunit.</text>
</comment>
<comment type="similarity">
    <text evidence="1">Belongs to the RnpA family.</text>
</comment>
<accession>Q8XH26</accession>
<keyword id="KW-0255">Endonuclease</keyword>
<keyword id="KW-0378">Hydrolase</keyword>
<keyword id="KW-0540">Nuclease</keyword>
<keyword id="KW-1185">Reference proteome</keyword>
<keyword id="KW-0694">RNA-binding</keyword>
<keyword id="KW-0819">tRNA processing</keyword>
<evidence type="ECO:0000255" key="1">
    <source>
        <dbReference type="HAMAP-Rule" id="MF_00227"/>
    </source>
</evidence>
<sequence length="125" mass="14440">MLLSLRKNNEFRTVYRRGKSYANDLLVLYVYPNRKNVTKDGERFNKVGVSVSKKVGKSVVRSRVKRLILENYRLNSSELKEGYDFVFIARVAINGKDFKQVGKAMNNLIKKAGLRDNEKIVHSND</sequence>
<name>RNPA_CLOPE</name>
<organism>
    <name type="scientific">Clostridium perfringens (strain 13 / Type A)</name>
    <dbReference type="NCBI Taxonomy" id="195102"/>
    <lineage>
        <taxon>Bacteria</taxon>
        <taxon>Bacillati</taxon>
        <taxon>Bacillota</taxon>
        <taxon>Clostridia</taxon>
        <taxon>Eubacteriales</taxon>
        <taxon>Clostridiaceae</taxon>
        <taxon>Clostridium</taxon>
    </lineage>
</organism>
<reference key="1">
    <citation type="journal article" date="2002" name="Proc. Natl. Acad. Sci. U.S.A.">
        <title>Complete genome sequence of Clostridium perfringens, an anaerobic flesh-eater.</title>
        <authorList>
            <person name="Shimizu T."/>
            <person name="Ohtani K."/>
            <person name="Hirakawa H."/>
            <person name="Ohshima K."/>
            <person name="Yamashita A."/>
            <person name="Shiba T."/>
            <person name="Ogasawara N."/>
            <person name="Hattori M."/>
            <person name="Kuhara S."/>
            <person name="Hayashi H."/>
        </authorList>
    </citation>
    <scope>NUCLEOTIDE SEQUENCE [LARGE SCALE GENOMIC DNA]</scope>
    <source>
        <strain>13 / Type A</strain>
    </source>
</reference>
<gene>
    <name evidence="1" type="primary">rnpA</name>
    <name type="ordered locus">CPE2659</name>
</gene>